<gene>
    <name type="primary">selenom</name>
    <name type="synonym">selm</name>
</gene>
<organism>
    <name type="scientific">Xenopus laevis</name>
    <name type="common">African clawed frog</name>
    <dbReference type="NCBI Taxonomy" id="8355"/>
    <lineage>
        <taxon>Eukaryota</taxon>
        <taxon>Metazoa</taxon>
        <taxon>Chordata</taxon>
        <taxon>Craniata</taxon>
        <taxon>Vertebrata</taxon>
        <taxon>Euteleostomi</taxon>
        <taxon>Amphibia</taxon>
        <taxon>Batrachia</taxon>
        <taxon>Anura</taxon>
        <taxon>Pipoidea</taxon>
        <taxon>Pipidae</taxon>
        <taxon>Xenopodinae</taxon>
        <taxon>Xenopus</taxon>
        <taxon>Xenopus</taxon>
    </lineage>
</organism>
<comment type="function">
    <text evidence="1">May function as a thiol-disulfide oxidoreductase that participates in disulfide bond formation.</text>
</comment>
<comment type="subcellular location">
    <subcellularLocation>
        <location evidence="5">Endoplasmic reticulum</location>
    </subcellularLocation>
</comment>
<comment type="similarity">
    <text evidence="5">Belongs to the selenoprotein M/F family.</text>
</comment>
<comment type="sequence caution" evidence="5">
    <conflict type="erroneous termination">
        <sequence resource="EMBL-CDS" id="AAH73243"/>
    </conflict>
    <text>Truncated C-terminus.</text>
</comment>
<sequence>MWLPLPLLLGLLQLQPILSYQIDWNKLERINRGKVESCGGUQLNRLKEVKGFVTEDLPLYHNLEMKHIPGADPELVLITSRYEELERIPLSDMKRDEINQLLKDLGFYRKSSPDAPVPAEFKMAPARASGDTKEDL</sequence>
<protein>
    <recommendedName>
        <fullName evidence="2">Selenoprotein M</fullName>
        <shortName>SelM</shortName>
    </recommendedName>
</protein>
<reference key="1">
    <citation type="submission" date="2004-06" db="EMBL/GenBank/DDBJ databases">
        <authorList>
            <consortium name="NIH - Xenopus Gene Collection (XGC) project"/>
        </authorList>
    </citation>
    <scope>NUCLEOTIDE SEQUENCE [LARGE SCALE MRNA]</scope>
    <source>
        <tissue>Spleen</tissue>
    </source>
</reference>
<evidence type="ECO:0000250" key="1"/>
<evidence type="ECO:0000250" key="2">
    <source>
        <dbReference type="UniProtKB" id="Q8WWX9"/>
    </source>
</evidence>
<evidence type="ECO:0000255" key="3"/>
<evidence type="ECO:0000256" key="4">
    <source>
        <dbReference type="SAM" id="MobiDB-lite"/>
    </source>
</evidence>
<evidence type="ECO:0000305" key="5"/>
<accession>Q6GP98</accession>
<proteinExistence type="evidence at transcript level"/>
<name>SELM_XENLA</name>
<feature type="signal peptide" evidence="3">
    <location>
        <begin position="1"/>
        <end position="19"/>
    </location>
</feature>
<feature type="chain" id="PRO_0000318608" description="Selenoprotein M">
    <location>
        <begin position="20"/>
        <end position="136"/>
    </location>
</feature>
<feature type="region of interest" description="Disordered" evidence="4">
    <location>
        <begin position="111"/>
        <end position="136"/>
    </location>
</feature>
<feature type="short sequence motif" description="Prevents secretion from ER" evidence="3">
    <location>
        <begin position="133"/>
        <end position="136"/>
    </location>
</feature>
<feature type="active site" description="Nucleophile" evidence="1">
    <location>
        <position position="38"/>
    </location>
</feature>
<feature type="active site" description="Nucleophile" evidence="1">
    <location>
        <position position="41"/>
    </location>
</feature>
<feature type="non-standard amino acid" description="Selenocysteine" evidence="1">
    <location>
        <position position="41"/>
    </location>
</feature>
<feature type="cross-link" description="Cysteinyl-selenocysteine (Cys-Sec)" evidence="3">
    <location>
        <begin position="38"/>
        <end position="41"/>
    </location>
</feature>
<keyword id="KW-0256">Endoplasmic reticulum</keyword>
<keyword id="KW-1185">Reference proteome</keyword>
<keyword id="KW-0712">Selenocysteine</keyword>
<keyword id="KW-0732">Signal</keyword>
<dbReference type="EMBL" id="BC073243">
    <property type="protein sequence ID" value="AAH73243.1"/>
    <property type="status" value="ALT_SEQ"/>
    <property type="molecule type" value="mRNA"/>
</dbReference>
<dbReference type="RefSeq" id="NP_001085717.2">
    <property type="nucleotide sequence ID" value="NM_001092248.2"/>
</dbReference>
<dbReference type="DNASU" id="444144"/>
<dbReference type="GeneID" id="444144"/>
<dbReference type="KEGG" id="xla:444144"/>
<dbReference type="AGR" id="Xenbase:XB-GENE-6255960"/>
<dbReference type="CTD" id="444144"/>
<dbReference type="Xenbase" id="XB-GENE-6255960">
    <property type="gene designation" value="selenom.L"/>
</dbReference>
<dbReference type="OrthoDB" id="25165at2759"/>
<dbReference type="Proteomes" id="UP000186698">
    <property type="component" value="Chromosome 1L"/>
</dbReference>
<dbReference type="Bgee" id="444144">
    <property type="expression patterns" value="Expressed in pancreas and 18 other cell types or tissues"/>
</dbReference>
<dbReference type="GO" id="GO:0005788">
    <property type="term" value="C:endoplasmic reticulum lumen"/>
    <property type="evidence" value="ECO:0000318"/>
    <property type="project" value="GO_Central"/>
</dbReference>
<dbReference type="GO" id="GO:0016491">
    <property type="term" value="F:oxidoreductase activity"/>
    <property type="evidence" value="ECO:0000318"/>
    <property type="project" value="GO_Central"/>
</dbReference>
<dbReference type="Gene3D" id="3.40.30.50">
    <property type="entry name" value="Sep15/SelM thioredoxin-like domain, active-site redox motif"/>
    <property type="match status" value="1"/>
</dbReference>
<dbReference type="InterPro" id="IPR038219">
    <property type="entry name" value="Sep15/SelM_sf"/>
</dbReference>
<dbReference type="InterPro" id="IPR039992">
    <property type="entry name" value="Sep15_SelM"/>
</dbReference>
<dbReference type="InterPro" id="IPR014912">
    <property type="entry name" value="Sep15_SelM_dom"/>
</dbReference>
<dbReference type="InterPro" id="IPR036249">
    <property type="entry name" value="Thioredoxin-like_sf"/>
</dbReference>
<dbReference type="PANTHER" id="PTHR13077">
    <property type="entry name" value="SELENOPROTEIN F"/>
    <property type="match status" value="1"/>
</dbReference>
<dbReference type="PANTHER" id="PTHR13077:SF7">
    <property type="entry name" value="SELENOPROTEIN M"/>
    <property type="match status" value="1"/>
</dbReference>
<dbReference type="Pfam" id="PF08806">
    <property type="entry name" value="Sep15_SelM"/>
    <property type="match status" value="1"/>
</dbReference>
<dbReference type="SUPFAM" id="SSF52833">
    <property type="entry name" value="Thioredoxin-like"/>
    <property type="match status" value="1"/>
</dbReference>